<keyword id="KW-0143">Chaperone</keyword>
<organism>
    <name type="scientific">Yersinia pestis bv. Antiqua (strain Angola)</name>
    <dbReference type="NCBI Taxonomy" id="349746"/>
    <lineage>
        <taxon>Bacteria</taxon>
        <taxon>Pseudomonadati</taxon>
        <taxon>Pseudomonadota</taxon>
        <taxon>Gammaproteobacteria</taxon>
        <taxon>Enterobacterales</taxon>
        <taxon>Yersiniaceae</taxon>
        <taxon>Yersinia</taxon>
    </lineage>
</organism>
<accession>A9R815</accession>
<protein>
    <recommendedName>
        <fullName evidence="1">Co-chaperone protein HscB</fullName>
    </recommendedName>
    <alternativeName>
        <fullName evidence="1">Hsc20</fullName>
    </alternativeName>
</protein>
<feature type="chain" id="PRO_1000131760" description="Co-chaperone protein HscB">
    <location>
        <begin position="1"/>
        <end position="174"/>
    </location>
</feature>
<feature type="domain" description="J" evidence="1">
    <location>
        <begin position="2"/>
        <end position="74"/>
    </location>
</feature>
<evidence type="ECO:0000255" key="1">
    <source>
        <dbReference type="HAMAP-Rule" id="MF_00682"/>
    </source>
</evidence>
<proteinExistence type="inferred from homology"/>
<gene>
    <name evidence="1" type="primary">hscB</name>
    <name type="ordered locus">YpAngola_A0432</name>
</gene>
<name>HSCB_YERPG</name>
<comment type="function">
    <text evidence="1">Co-chaperone involved in the maturation of iron-sulfur cluster-containing proteins. Seems to help targeting proteins to be folded toward HscA.</text>
</comment>
<comment type="subunit">
    <text evidence="1">Interacts with HscA and stimulates its ATPase activity. Interacts with IscU.</text>
</comment>
<comment type="similarity">
    <text evidence="1">Belongs to the HscB family.</text>
</comment>
<dbReference type="EMBL" id="CP000901">
    <property type="protein sequence ID" value="ABX84960.1"/>
    <property type="molecule type" value="Genomic_DNA"/>
</dbReference>
<dbReference type="RefSeq" id="WP_002209833.1">
    <property type="nucleotide sequence ID" value="NZ_CP009935.1"/>
</dbReference>
<dbReference type="SMR" id="A9R815"/>
<dbReference type="GeneID" id="57975850"/>
<dbReference type="KEGG" id="ypg:YpAngola_A0432"/>
<dbReference type="PATRIC" id="fig|349746.12.peg.1387"/>
<dbReference type="GO" id="GO:1990230">
    <property type="term" value="C:iron-sulfur cluster transfer complex"/>
    <property type="evidence" value="ECO:0007669"/>
    <property type="project" value="TreeGrafter"/>
</dbReference>
<dbReference type="GO" id="GO:0001671">
    <property type="term" value="F:ATPase activator activity"/>
    <property type="evidence" value="ECO:0007669"/>
    <property type="project" value="InterPro"/>
</dbReference>
<dbReference type="GO" id="GO:0051087">
    <property type="term" value="F:protein-folding chaperone binding"/>
    <property type="evidence" value="ECO:0007669"/>
    <property type="project" value="InterPro"/>
</dbReference>
<dbReference type="GO" id="GO:0044571">
    <property type="term" value="P:[2Fe-2S] cluster assembly"/>
    <property type="evidence" value="ECO:0007669"/>
    <property type="project" value="InterPro"/>
</dbReference>
<dbReference type="GO" id="GO:0051259">
    <property type="term" value="P:protein complex oligomerization"/>
    <property type="evidence" value="ECO:0007669"/>
    <property type="project" value="InterPro"/>
</dbReference>
<dbReference type="GO" id="GO:0006457">
    <property type="term" value="P:protein folding"/>
    <property type="evidence" value="ECO:0007669"/>
    <property type="project" value="UniProtKB-UniRule"/>
</dbReference>
<dbReference type="CDD" id="cd06257">
    <property type="entry name" value="DnaJ"/>
    <property type="match status" value="1"/>
</dbReference>
<dbReference type="FunFam" id="1.10.287.110:FF:000008">
    <property type="entry name" value="Co-chaperone protein HscB"/>
    <property type="match status" value="1"/>
</dbReference>
<dbReference type="Gene3D" id="1.10.287.110">
    <property type="entry name" value="DnaJ domain"/>
    <property type="match status" value="1"/>
</dbReference>
<dbReference type="Gene3D" id="1.20.1280.20">
    <property type="entry name" value="HscB, C-terminal domain"/>
    <property type="match status" value="1"/>
</dbReference>
<dbReference type="HAMAP" id="MF_00682">
    <property type="entry name" value="HscB"/>
    <property type="match status" value="1"/>
</dbReference>
<dbReference type="InterPro" id="IPR001623">
    <property type="entry name" value="DnaJ_domain"/>
</dbReference>
<dbReference type="InterPro" id="IPR004640">
    <property type="entry name" value="HscB"/>
</dbReference>
<dbReference type="InterPro" id="IPR036386">
    <property type="entry name" value="HscB_C_sf"/>
</dbReference>
<dbReference type="InterPro" id="IPR009073">
    <property type="entry name" value="HscB_oligo_C"/>
</dbReference>
<dbReference type="InterPro" id="IPR036869">
    <property type="entry name" value="J_dom_sf"/>
</dbReference>
<dbReference type="NCBIfam" id="TIGR00714">
    <property type="entry name" value="hscB"/>
    <property type="match status" value="1"/>
</dbReference>
<dbReference type="NCBIfam" id="NF003449">
    <property type="entry name" value="PRK05014.1"/>
    <property type="match status" value="1"/>
</dbReference>
<dbReference type="PANTHER" id="PTHR14021">
    <property type="entry name" value="IRON-SULFUR CLUSTER CO-CHAPERONE PROTEIN HSCB"/>
    <property type="match status" value="1"/>
</dbReference>
<dbReference type="PANTHER" id="PTHR14021:SF15">
    <property type="entry name" value="IRON-SULFUR CLUSTER CO-CHAPERONE PROTEIN HSCB"/>
    <property type="match status" value="1"/>
</dbReference>
<dbReference type="Pfam" id="PF00226">
    <property type="entry name" value="DnaJ"/>
    <property type="match status" value="1"/>
</dbReference>
<dbReference type="Pfam" id="PF07743">
    <property type="entry name" value="HSCB_C"/>
    <property type="match status" value="1"/>
</dbReference>
<dbReference type="SMART" id="SM00271">
    <property type="entry name" value="DnaJ"/>
    <property type="match status" value="1"/>
</dbReference>
<dbReference type="SUPFAM" id="SSF46565">
    <property type="entry name" value="Chaperone J-domain"/>
    <property type="match status" value="1"/>
</dbReference>
<dbReference type="SUPFAM" id="SSF47144">
    <property type="entry name" value="HSC20 (HSCB), C-terminal oligomerisation domain"/>
    <property type="match status" value="1"/>
</dbReference>
<dbReference type="PROSITE" id="PS50076">
    <property type="entry name" value="DNAJ_2"/>
    <property type="match status" value="1"/>
</dbReference>
<reference key="1">
    <citation type="journal article" date="2010" name="J. Bacteriol.">
        <title>Genome sequence of the deep-rooted Yersinia pestis strain Angola reveals new insights into the evolution and pangenome of the plague bacterium.</title>
        <authorList>
            <person name="Eppinger M."/>
            <person name="Worsham P.L."/>
            <person name="Nikolich M.P."/>
            <person name="Riley D.R."/>
            <person name="Sebastian Y."/>
            <person name="Mou S."/>
            <person name="Achtman M."/>
            <person name="Lindler L.E."/>
            <person name="Ravel J."/>
        </authorList>
    </citation>
    <scope>NUCLEOTIDE SEQUENCE [LARGE SCALE GENOMIC DNA]</scope>
    <source>
        <strain>Angola</strain>
    </source>
</reference>
<sequence length="174" mass="20635">MDYFTLFGLPARYLIDGNQLTTRYQELQRQFHPDRFATQPERERLASMQQAATINDAYQTLKHPLKRAEYMLSLQGFDLGNEQHTMRDTAFLMEQLELREELDAIERKPDAETLLAEFSRRVAQMTTTRTQQMVEQLDAQLWVQAADTVRKLRFLDKLQQQVEQLEERLFDDFA</sequence>